<evidence type="ECO:0000255" key="1">
    <source>
        <dbReference type="HAMAP-Rule" id="MF_00090"/>
    </source>
</evidence>
<protein>
    <recommendedName>
        <fullName evidence="1">Protein-L-isoaspartate O-methyltransferase</fullName>
        <ecNumber evidence="1">2.1.1.77</ecNumber>
    </recommendedName>
    <alternativeName>
        <fullName evidence="1">L-isoaspartyl protein carboxyl methyltransferase</fullName>
    </alternativeName>
    <alternativeName>
        <fullName evidence="1">Protein L-isoaspartyl methyltransferase</fullName>
    </alternativeName>
    <alternativeName>
        <fullName evidence="1">Protein-beta-aspartate methyltransferase</fullName>
        <shortName evidence="1">PIMT</shortName>
    </alternativeName>
</protein>
<name>PIMT_BRASO</name>
<accession>A4YV66</accession>
<sequence>MPPTAPPEKMMFQLILRRRGISDQAVLRAMEEVPREEFVLPADRADAYRDSAMAIACGQTISQPFVVAYMTEQLKLQKSHRVLEIGTGSGYQAAVLARLTDHVLTVERFRTLADRARERLEKLNCFNVEVMLGDGYALPAGAGQFDRIIVTAAMEDIPQSLLDRLEPDGILIAPVGPHHGVQRLVRVTRTGDRFDRKELVDVRFVPAIPGIAREL</sequence>
<proteinExistence type="inferred from homology"/>
<organism>
    <name type="scientific">Bradyrhizobium sp. (strain ORS 278)</name>
    <dbReference type="NCBI Taxonomy" id="114615"/>
    <lineage>
        <taxon>Bacteria</taxon>
        <taxon>Pseudomonadati</taxon>
        <taxon>Pseudomonadota</taxon>
        <taxon>Alphaproteobacteria</taxon>
        <taxon>Hyphomicrobiales</taxon>
        <taxon>Nitrobacteraceae</taxon>
        <taxon>Bradyrhizobium</taxon>
    </lineage>
</organism>
<feature type="chain" id="PRO_0000351823" description="Protein-L-isoaspartate O-methyltransferase">
    <location>
        <begin position="1"/>
        <end position="215"/>
    </location>
</feature>
<feature type="active site" evidence="1">
    <location>
        <position position="62"/>
    </location>
</feature>
<keyword id="KW-0963">Cytoplasm</keyword>
<keyword id="KW-0489">Methyltransferase</keyword>
<keyword id="KW-1185">Reference proteome</keyword>
<keyword id="KW-0949">S-adenosyl-L-methionine</keyword>
<keyword id="KW-0808">Transferase</keyword>
<gene>
    <name evidence="1" type="primary">pcm</name>
    <name type="ordered locus">BRADO4040</name>
</gene>
<dbReference type="EC" id="2.1.1.77" evidence="1"/>
<dbReference type="EMBL" id="CU234118">
    <property type="protein sequence ID" value="CAL77792.1"/>
    <property type="molecule type" value="Genomic_DNA"/>
</dbReference>
<dbReference type="RefSeq" id="WP_011926926.1">
    <property type="nucleotide sequence ID" value="NC_009445.1"/>
</dbReference>
<dbReference type="SMR" id="A4YV66"/>
<dbReference type="STRING" id="114615.BRADO4040"/>
<dbReference type="KEGG" id="bra:BRADO4040"/>
<dbReference type="eggNOG" id="COG2518">
    <property type="taxonomic scope" value="Bacteria"/>
</dbReference>
<dbReference type="HOGENOM" id="CLU_055432_2_0_5"/>
<dbReference type="Proteomes" id="UP000001994">
    <property type="component" value="Chromosome"/>
</dbReference>
<dbReference type="GO" id="GO:0005737">
    <property type="term" value="C:cytoplasm"/>
    <property type="evidence" value="ECO:0007669"/>
    <property type="project" value="UniProtKB-SubCell"/>
</dbReference>
<dbReference type="GO" id="GO:0004719">
    <property type="term" value="F:protein-L-isoaspartate (D-aspartate) O-methyltransferase activity"/>
    <property type="evidence" value="ECO:0007669"/>
    <property type="project" value="UniProtKB-UniRule"/>
</dbReference>
<dbReference type="GO" id="GO:0032259">
    <property type="term" value="P:methylation"/>
    <property type="evidence" value="ECO:0007669"/>
    <property type="project" value="UniProtKB-KW"/>
</dbReference>
<dbReference type="GO" id="GO:0036211">
    <property type="term" value="P:protein modification process"/>
    <property type="evidence" value="ECO:0007669"/>
    <property type="project" value="UniProtKB-UniRule"/>
</dbReference>
<dbReference type="GO" id="GO:0030091">
    <property type="term" value="P:protein repair"/>
    <property type="evidence" value="ECO:0007669"/>
    <property type="project" value="UniProtKB-UniRule"/>
</dbReference>
<dbReference type="CDD" id="cd02440">
    <property type="entry name" value="AdoMet_MTases"/>
    <property type="match status" value="1"/>
</dbReference>
<dbReference type="FunFam" id="3.40.50.150:FF:000010">
    <property type="entry name" value="Protein-L-isoaspartate O-methyltransferase"/>
    <property type="match status" value="1"/>
</dbReference>
<dbReference type="Gene3D" id="3.40.50.150">
    <property type="entry name" value="Vaccinia Virus protein VP39"/>
    <property type="match status" value="1"/>
</dbReference>
<dbReference type="HAMAP" id="MF_00090">
    <property type="entry name" value="PIMT"/>
    <property type="match status" value="1"/>
</dbReference>
<dbReference type="InterPro" id="IPR000682">
    <property type="entry name" value="PCMT"/>
</dbReference>
<dbReference type="InterPro" id="IPR029063">
    <property type="entry name" value="SAM-dependent_MTases_sf"/>
</dbReference>
<dbReference type="NCBIfam" id="TIGR00080">
    <property type="entry name" value="pimt"/>
    <property type="match status" value="1"/>
</dbReference>
<dbReference type="NCBIfam" id="NF001453">
    <property type="entry name" value="PRK00312.1"/>
    <property type="match status" value="1"/>
</dbReference>
<dbReference type="PANTHER" id="PTHR11579">
    <property type="entry name" value="PROTEIN-L-ISOASPARTATE O-METHYLTRANSFERASE"/>
    <property type="match status" value="1"/>
</dbReference>
<dbReference type="PANTHER" id="PTHR11579:SF0">
    <property type="entry name" value="PROTEIN-L-ISOASPARTATE(D-ASPARTATE) O-METHYLTRANSFERASE"/>
    <property type="match status" value="1"/>
</dbReference>
<dbReference type="Pfam" id="PF01135">
    <property type="entry name" value="PCMT"/>
    <property type="match status" value="1"/>
</dbReference>
<dbReference type="SUPFAM" id="SSF53335">
    <property type="entry name" value="S-adenosyl-L-methionine-dependent methyltransferases"/>
    <property type="match status" value="1"/>
</dbReference>
<reference key="1">
    <citation type="journal article" date="2007" name="Science">
        <title>Legumes symbioses: absence of nod genes in photosynthetic bradyrhizobia.</title>
        <authorList>
            <person name="Giraud E."/>
            <person name="Moulin L."/>
            <person name="Vallenet D."/>
            <person name="Barbe V."/>
            <person name="Cytryn E."/>
            <person name="Avarre J.-C."/>
            <person name="Jaubert M."/>
            <person name="Simon D."/>
            <person name="Cartieaux F."/>
            <person name="Prin Y."/>
            <person name="Bena G."/>
            <person name="Hannibal L."/>
            <person name="Fardoux J."/>
            <person name="Kojadinovic M."/>
            <person name="Vuillet L."/>
            <person name="Lajus A."/>
            <person name="Cruveiller S."/>
            <person name="Rouy Z."/>
            <person name="Mangenot S."/>
            <person name="Segurens B."/>
            <person name="Dossat C."/>
            <person name="Franck W.L."/>
            <person name="Chang W.-S."/>
            <person name="Saunders E."/>
            <person name="Bruce D."/>
            <person name="Richardson P."/>
            <person name="Normand P."/>
            <person name="Dreyfus B."/>
            <person name="Pignol D."/>
            <person name="Stacey G."/>
            <person name="Emerich D."/>
            <person name="Vermeglio A."/>
            <person name="Medigue C."/>
            <person name="Sadowsky M."/>
        </authorList>
    </citation>
    <scope>NUCLEOTIDE SEQUENCE [LARGE SCALE GENOMIC DNA]</scope>
    <source>
        <strain>ORS 278</strain>
    </source>
</reference>
<comment type="function">
    <text evidence="1">Catalyzes the methyl esterification of L-isoaspartyl residues in peptides and proteins that result from spontaneous decomposition of normal L-aspartyl and L-asparaginyl residues. It plays a role in the repair and/or degradation of damaged proteins.</text>
</comment>
<comment type="catalytic activity">
    <reaction evidence="1">
        <text>[protein]-L-isoaspartate + S-adenosyl-L-methionine = [protein]-L-isoaspartate alpha-methyl ester + S-adenosyl-L-homocysteine</text>
        <dbReference type="Rhea" id="RHEA:12705"/>
        <dbReference type="Rhea" id="RHEA-COMP:12143"/>
        <dbReference type="Rhea" id="RHEA-COMP:12144"/>
        <dbReference type="ChEBI" id="CHEBI:57856"/>
        <dbReference type="ChEBI" id="CHEBI:59789"/>
        <dbReference type="ChEBI" id="CHEBI:90596"/>
        <dbReference type="ChEBI" id="CHEBI:90598"/>
        <dbReference type="EC" id="2.1.1.77"/>
    </reaction>
</comment>
<comment type="subcellular location">
    <subcellularLocation>
        <location evidence="1">Cytoplasm</location>
    </subcellularLocation>
</comment>
<comment type="similarity">
    <text evidence="1">Belongs to the methyltransferase superfamily. L-isoaspartyl/D-aspartyl protein methyltransferase family.</text>
</comment>